<accession>B8H640</accession>
<evidence type="ECO:0000255" key="1">
    <source>
        <dbReference type="HAMAP-Rule" id="MF_01694"/>
    </source>
</evidence>
<evidence type="ECO:0000255" key="2">
    <source>
        <dbReference type="PROSITE-ProRule" id="PRU01266"/>
    </source>
</evidence>
<comment type="function">
    <text evidence="1">Catalyzes the conversion of dethiobiotin (DTB) to biotin by the insertion of a sulfur atom into dethiobiotin via a radical-based mechanism.</text>
</comment>
<comment type="catalytic activity">
    <reaction evidence="1">
        <text>(4R,5S)-dethiobiotin + (sulfur carrier)-SH + 2 reduced [2Fe-2S]-[ferredoxin] + 2 S-adenosyl-L-methionine = (sulfur carrier)-H + biotin + 2 5'-deoxyadenosine + 2 L-methionine + 2 oxidized [2Fe-2S]-[ferredoxin]</text>
        <dbReference type="Rhea" id="RHEA:22060"/>
        <dbReference type="Rhea" id="RHEA-COMP:10000"/>
        <dbReference type="Rhea" id="RHEA-COMP:10001"/>
        <dbReference type="Rhea" id="RHEA-COMP:14737"/>
        <dbReference type="Rhea" id="RHEA-COMP:14739"/>
        <dbReference type="ChEBI" id="CHEBI:17319"/>
        <dbReference type="ChEBI" id="CHEBI:29917"/>
        <dbReference type="ChEBI" id="CHEBI:33737"/>
        <dbReference type="ChEBI" id="CHEBI:33738"/>
        <dbReference type="ChEBI" id="CHEBI:57586"/>
        <dbReference type="ChEBI" id="CHEBI:57844"/>
        <dbReference type="ChEBI" id="CHEBI:59789"/>
        <dbReference type="ChEBI" id="CHEBI:64428"/>
        <dbReference type="ChEBI" id="CHEBI:149473"/>
        <dbReference type="EC" id="2.8.1.6"/>
    </reaction>
</comment>
<comment type="cofactor">
    <cofactor evidence="1">
        <name>[4Fe-4S] cluster</name>
        <dbReference type="ChEBI" id="CHEBI:49883"/>
    </cofactor>
    <text evidence="1">Binds 1 [4Fe-4S] cluster. The cluster is coordinated with 3 cysteines and an exchangeable S-adenosyl-L-methionine.</text>
</comment>
<comment type="cofactor">
    <cofactor evidence="1">
        <name>[2Fe-2S] cluster</name>
        <dbReference type="ChEBI" id="CHEBI:190135"/>
    </cofactor>
    <text evidence="1">Binds 1 [2Fe-2S] cluster. The cluster is coordinated with 3 cysteines and 1 arginine.</text>
</comment>
<comment type="pathway">
    <text evidence="1">Cofactor biosynthesis; biotin biosynthesis; biotin from 7,8-diaminononanoate: step 2/2.</text>
</comment>
<comment type="subunit">
    <text evidence="1">Homodimer.</text>
</comment>
<comment type="similarity">
    <text evidence="1">Belongs to the radical SAM superfamily. Biotin synthase family.</text>
</comment>
<protein>
    <recommendedName>
        <fullName evidence="1">Biotin synthase</fullName>
        <ecNumber evidence="1">2.8.1.6</ecNumber>
    </recommendedName>
</protein>
<name>BIOB_CAUVN</name>
<dbReference type="EC" id="2.8.1.6" evidence="1"/>
<dbReference type="EMBL" id="CP001340">
    <property type="protein sequence ID" value="ACL97101.1"/>
    <property type="molecule type" value="Genomic_DNA"/>
</dbReference>
<dbReference type="RefSeq" id="WP_010921350.1">
    <property type="nucleotide sequence ID" value="NC_011916.1"/>
</dbReference>
<dbReference type="RefSeq" id="YP_002519009.1">
    <property type="nucleotide sequence ID" value="NC_011916.1"/>
</dbReference>
<dbReference type="SMR" id="B8H640"/>
<dbReference type="GeneID" id="7329721"/>
<dbReference type="KEGG" id="ccs:CCNA_03636"/>
<dbReference type="PATRIC" id="fig|565050.3.peg.3547"/>
<dbReference type="HOGENOM" id="CLU_033172_1_2_5"/>
<dbReference type="OrthoDB" id="9786826at2"/>
<dbReference type="PhylomeDB" id="B8H640"/>
<dbReference type="UniPathway" id="UPA00078">
    <property type="reaction ID" value="UER00162"/>
</dbReference>
<dbReference type="Proteomes" id="UP000001364">
    <property type="component" value="Chromosome"/>
</dbReference>
<dbReference type="GO" id="GO:0051537">
    <property type="term" value="F:2 iron, 2 sulfur cluster binding"/>
    <property type="evidence" value="ECO:0007669"/>
    <property type="project" value="UniProtKB-KW"/>
</dbReference>
<dbReference type="GO" id="GO:0051539">
    <property type="term" value="F:4 iron, 4 sulfur cluster binding"/>
    <property type="evidence" value="ECO:0007669"/>
    <property type="project" value="UniProtKB-KW"/>
</dbReference>
<dbReference type="GO" id="GO:0004076">
    <property type="term" value="F:biotin synthase activity"/>
    <property type="evidence" value="ECO:0007669"/>
    <property type="project" value="UniProtKB-UniRule"/>
</dbReference>
<dbReference type="GO" id="GO:0005506">
    <property type="term" value="F:iron ion binding"/>
    <property type="evidence" value="ECO:0007669"/>
    <property type="project" value="UniProtKB-UniRule"/>
</dbReference>
<dbReference type="GO" id="GO:0009102">
    <property type="term" value="P:biotin biosynthetic process"/>
    <property type="evidence" value="ECO:0007669"/>
    <property type="project" value="UniProtKB-UniRule"/>
</dbReference>
<dbReference type="CDD" id="cd01335">
    <property type="entry name" value="Radical_SAM"/>
    <property type="match status" value="1"/>
</dbReference>
<dbReference type="FunFam" id="3.20.20.70:FF:000011">
    <property type="entry name" value="Biotin synthase"/>
    <property type="match status" value="1"/>
</dbReference>
<dbReference type="Gene3D" id="3.20.20.70">
    <property type="entry name" value="Aldolase class I"/>
    <property type="match status" value="1"/>
</dbReference>
<dbReference type="HAMAP" id="MF_01694">
    <property type="entry name" value="BioB"/>
    <property type="match status" value="1"/>
</dbReference>
<dbReference type="InterPro" id="IPR013785">
    <property type="entry name" value="Aldolase_TIM"/>
</dbReference>
<dbReference type="InterPro" id="IPR010722">
    <property type="entry name" value="BATS_dom"/>
</dbReference>
<dbReference type="InterPro" id="IPR002684">
    <property type="entry name" value="Biotin_synth/BioAB"/>
</dbReference>
<dbReference type="InterPro" id="IPR024177">
    <property type="entry name" value="Biotin_synthase"/>
</dbReference>
<dbReference type="InterPro" id="IPR006638">
    <property type="entry name" value="Elp3/MiaA/NifB-like_rSAM"/>
</dbReference>
<dbReference type="InterPro" id="IPR007197">
    <property type="entry name" value="rSAM"/>
</dbReference>
<dbReference type="NCBIfam" id="TIGR00433">
    <property type="entry name" value="bioB"/>
    <property type="match status" value="1"/>
</dbReference>
<dbReference type="PANTHER" id="PTHR22976">
    <property type="entry name" value="BIOTIN SYNTHASE"/>
    <property type="match status" value="1"/>
</dbReference>
<dbReference type="PANTHER" id="PTHR22976:SF2">
    <property type="entry name" value="BIOTIN SYNTHASE, MITOCHONDRIAL"/>
    <property type="match status" value="1"/>
</dbReference>
<dbReference type="Pfam" id="PF06968">
    <property type="entry name" value="BATS"/>
    <property type="match status" value="1"/>
</dbReference>
<dbReference type="Pfam" id="PF04055">
    <property type="entry name" value="Radical_SAM"/>
    <property type="match status" value="1"/>
</dbReference>
<dbReference type="PIRSF" id="PIRSF001619">
    <property type="entry name" value="Biotin_synth"/>
    <property type="match status" value="1"/>
</dbReference>
<dbReference type="SFLD" id="SFLDF00272">
    <property type="entry name" value="biotin_synthase"/>
    <property type="match status" value="1"/>
</dbReference>
<dbReference type="SFLD" id="SFLDS00029">
    <property type="entry name" value="Radical_SAM"/>
    <property type="match status" value="1"/>
</dbReference>
<dbReference type="SMART" id="SM00876">
    <property type="entry name" value="BATS"/>
    <property type="match status" value="1"/>
</dbReference>
<dbReference type="SMART" id="SM00729">
    <property type="entry name" value="Elp3"/>
    <property type="match status" value="1"/>
</dbReference>
<dbReference type="SUPFAM" id="SSF102114">
    <property type="entry name" value="Radical SAM enzymes"/>
    <property type="match status" value="1"/>
</dbReference>
<dbReference type="PROSITE" id="PS51918">
    <property type="entry name" value="RADICAL_SAM"/>
    <property type="match status" value="1"/>
</dbReference>
<sequence length="341" mass="36566">MSEITASPRHDWTLAEVEALFALPFMELVFQAANVHRAHFDPSEIQLSQLLSVKTGGCAENCGYCSQSAHFKTGLKADKLMAADDVVAKARAARDGGAQRFCMGAAWRELKDRDLPKLTEMIGEVKALGLETCATLGMLTADQAKALKAAGLDYYNHNLDTGPDYYKDVVTTRTYQERLDTLAHVRDAGMSTCCGGIVGMGEQRRDRAGLLHQLATLPAHPDSLPINGLVPISGTPLGDKVLSEGKAIDAIEFVRTIAVARIVCPKSMVRLSAGREGMSRELQALCFMAGANSIFVGGKLLTTPLPGQDEDSQLFQDLDLKPMGGAVRVEAKADAAMVAAE</sequence>
<organism>
    <name type="scientific">Caulobacter vibrioides (strain NA1000 / CB15N)</name>
    <name type="common">Caulobacter crescentus</name>
    <dbReference type="NCBI Taxonomy" id="565050"/>
    <lineage>
        <taxon>Bacteria</taxon>
        <taxon>Pseudomonadati</taxon>
        <taxon>Pseudomonadota</taxon>
        <taxon>Alphaproteobacteria</taxon>
        <taxon>Caulobacterales</taxon>
        <taxon>Caulobacteraceae</taxon>
        <taxon>Caulobacter</taxon>
    </lineage>
</organism>
<proteinExistence type="inferred from homology"/>
<feature type="chain" id="PRO_0000381291" description="Biotin synthase">
    <location>
        <begin position="1"/>
        <end position="341"/>
    </location>
</feature>
<feature type="domain" description="Radical SAM core" evidence="2">
    <location>
        <begin position="43"/>
        <end position="266"/>
    </location>
</feature>
<feature type="binding site" evidence="1">
    <location>
        <position position="58"/>
    </location>
    <ligand>
        <name>[4Fe-4S] cluster</name>
        <dbReference type="ChEBI" id="CHEBI:49883"/>
        <note>4Fe-4S-S-AdoMet</note>
    </ligand>
</feature>
<feature type="binding site" evidence="1">
    <location>
        <position position="62"/>
    </location>
    <ligand>
        <name>[4Fe-4S] cluster</name>
        <dbReference type="ChEBI" id="CHEBI:49883"/>
        <note>4Fe-4S-S-AdoMet</note>
    </ligand>
</feature>
<feature type="binding site" evidence="1">
    <location>
        <position position="65"/>
    </location>
    <ligand>
        <name>[4Fe-4S] cluster</name>
        <dbReference type="ChEBI" id="CHEBI:49883"/>
        <note>4Fe-4S-S-AdoMet</note>
    </ligand>
</feature>
<feature type="binding site" evidence="1">
    <location>
        <position position="102"/>
    </location>
    <ligand>
        <name>[2Fe-2S] cluster</name>
        <dbReference type="ChEBI" id="CHEBI:190135"/>
    </ligand>
</feature>
<feature type="binding site" evidence="1">
    <location>
        <position position="133"/>
    </location>
    <ligand>
        <name>[2Fe-2S] cluster</name>
        <dbReference type="ChEBI" id="CHEBI:190135"/>
    </ligand>
</feature>
<feature type="binding site" evidence="1">
    <location>
        <position position="193"/>
    </location>
    <ligand>
        <name>[2Fe-2S] cluster</name>
        <dbReference type="ChEBI" id="CHEBI:190135"/>
    </ligand>
</feature>
<feature type="binding site" evidence="1">
    <location>
        <position position="270"/>
    </location>
    <ligand>
        <name>[2Fe-2S] cluster</name>
        <dbReference type="ChEBI" id="CHEBI:190135"/>
    </ligand>
</feature>
<gene>
    <name evidence="1" type="primary">bioB</name>
    <name type="ordered locus">CCNA_03636</name>
</gene>
<reference key="1">
    <citation type="journal article" date="2010" name="J. Bacteriol.">
        <title>The genetic basis of laboratory adaptation in Caulobacter crescentus.</title>
        <authorList>
            <person name="Marks M.E."/>
            <person name="Castro-Rojas C.M."/>
            <person name="Teiling C."/>
            <person name="Du L."/>
            <person name="Kapatral V."/>
            <person name="Walunas T.L."/>
            <person name="Crosson S."/>
        </authorList>
    </citation>
    <scope>NUCLEOTIDE SEQUENCE [LARGE SCALE GENOMIC DNA]</scope>
    <source>
        <strain>NA1000 / CB15N</strain>
    </source>
</reference>
<keyword id="KW-0001">2Fe-2S</keyword>
<keyword id="KW-0004">4Fe-4S</keyword>
<keyword id="KW-0093">Biotin biosynthesis</keyword>
<keyword id="KW-0408">Iron</keyword>
<keyword id="KW-0411">Iron-sulfur</keyword>
<keyword id="KW-0479">Metal-binding</keyword>
<keyword id="KW-1185">Reference proteome</keyword>
<keyword id="KW-0949">S-adenosyl-L-methionine</keyword>
<keyword id="KW-0808">Transferase</keyword>